<organism>
    <name type="scientific">Streptococcus uberis (strain ATCC BAA-854 / 0140J)</name>
    <dbReference type="NCBI Taxonomy" id="218495"/>
    <lineage>
        <taxon>Bacteria</taxon>
        <taxon>Bacillati</taxon>
        <taxon>Bacillota</taxon>
        <taxon>Bacilli</taxon>
        <taxon>Lactobacillales</taxon>
        <taxon>Streptococcaceae</taxon>
        <taxon>Streptococcus</taxon>
    </lineage>
</organism>
<reference key="1">
    <citation type="journal article" date="2009" name="BMC Genomics">
        <title>Evidence for niche adaptation in the genome of the bovine pathogen Streptococcus uberis.</title>
        <authorList>
            <person name="Ward P.N."/>
            <person name="Holden M.T.G."/>
            <person name="Leigh J.A."/>
            <person name="Lennard N."/>
            <person name="Bignell A."/>
            <person name="Barron A."/>
            <person name="Clark L."/>
            <person name="Quail M.A."/>
            <person name="Woodward J."/>
            <person name="Barrell B.G."/>
            <person name="Egan S.A."/>
            <person name="Field T.R."/>
            <person name="Maskell D."/>
            <person name="Kehoe M."/>
            <person name="Dowson C.G."/>
            <person name="Chanter N."/>
            <person name="Whatmore A.M."/>
            <person name="Bentley S.D."/>
            <person name="Parkhill J."/>
        </authorList>
    </citation>
    <scope>NUCLEOTIDE SEQUENCE [LARGE SCALE GENOMIC DNA]</scope>
    <source>
        <strain>ATCC BAA-854 / 0140J</strain>
    </source>
</reference>
<comment type="similarity">
    <text evidence="1">Belongs to the bacterial ribosomal protein bL32 family.</text>
</comment>
<dbReference type="EMBL" id="AM946015">
    <property type="protein sequence ID" value="CAR43806.1"/>
    <property type="molecule type" value="Genomic_DNA"/>
</dbReference>
<dbReference type="RefSeq" id="WP_003085054.1">
    <property type="nucleotide sequence ID" value="NC_012004.1"/>
</dbReference>
<dbReference type="SMR" id="B9DW82"/>
<dbReference type="STRING" id="218495.SUB1795"/>
<dbReference type="GeneID" id="93827113"/>
<dbReference type="KEGG" id="sub:SUB1795"/>
<dbReference type="eggNOG" id="COG0333">
    <property type="taxonomic scope" value="Bacteria"/>
</dbReference>
<dbReference type="HOGENOM" id="CLU_129084_2_3_9"/>
<dbReference type="OrthoDB" id="9812874at2"/>
<dbReference type="Proteomes" id="UP000000449">
    <property type="component" value="Chromosome"/>
</dbReference>
<dbReference type="GO" id="GO:0015934">
    <property type="term" value="C:large ribosomal subunit"/>
    <property type="evidence" value="ECO:0007669"/>
    <property type="project" value="InterPro"/>
</dbReference>
<dbReference type="GO" id="GO:0003735">
    <property type="term" value="F:structural constituent of ribosome"/>
    <property type="evidence" value="ECO:0007669"/>
    <property type="project" value="InterPro"/>
</dbReference>
<dbReference type="GO" id="GO:0006412">
    <property type="term" value="P:translation"/>
    <property type="evidence" value="ECO:0007669"/>
    <property type="project" value="UniProtKB-UniRule"/>
</dbReference>
<dbReference type="HAMAP" id="MF_00340">
    <property type="entry name" value="Ribosomal_bL32"/>
    <property type="match status" value="1"/>
</dbReference>
<dbReference type="InterPro" id="IPR002677">
    <property type="entry name" value="Ribosomal_bL32"/>
</dbReference>
<dbReference type="InterPro" id="IPR044957">
    <property type="entry name" value="Ribosomal_bL32_bact"/>
</dbReference>
<dbReference type="InterPro" id="IPR011332">
    <property type="entry name" value="Ribosomal_zn-bd"/>
</dbReference>
<dbReference type="NCBIfam" id="TIGR01031">
    <property type="entry name" value="rpmF_bact"/>
    <property type="match status" value="1"/>
</dbReference>
<dbReference type="PANTHER" id="PTHR35534">
    <property type="entry name" value="50S RIBOSOMAL PROTEIN L32"/>
    <property type="match status" value="1"/>
</dbReference>
<dbReference type="PANTHER" id="PTHR35534:SF1">
    <property type="entry name" value="LARGE RIBOSOMAL SUBUNIT PROTEIN BL32"/>
    <property type="match status" value="1"/>
</dbReference>
<dbReference type="Pfam" id="PF01783">
    <property type="entry name" value="Ribosomal_L32p"/>
    <property type="match status" value="1"/>
</dbReference>
<dbReference type="SUPFAM" id="SSF57829">
    <property type="entry name" value="Zn-binding ribosomal proteins"/>
    <property type="match status" value="1"/>
</dbReference>
<sequence>MAVPARHTSKAKKNKRRTHYKLTAPSVQFDETTGDFSRSHRVSLKGYYKGRKIAKANEAK</sequence>
<protein>
    <recommendedName>
        <fullName evidence="1">Large ribosomal subunit protein bL32</fullName>
    </recommendedName>
    <alternativeName>
        <fullName evidence="3">50S ribosomal protein L32</fullName>
    </alternativeName>
</protein>
<name>RL32_STRU0</name>
<accession>B9DW82</accession>
<gene>
    <name evidence="1" type="primary">rpmF</name>
    <name type="ordered locus">SUB1795</name>
</gene>
<keyword id="KW-1185">Reference proteome</keyword>
<keyword id="KW-0687">Ribonucleoprotein</keyword>
<keyword id="KW-0689">Ribosomal protein</keyword>
<proteinExistence type="inferred from homology"/>
<feature type="chain" id="PRO_1000196000" description="Large ribosomal subunit protein bL32">
    <location>
        <begin position="1"/>
        <end position="60"/>
    </location>
</feature>
<feature type="region of interest" description="Disordered" evidence="2">
    <location>
        <begin position="1"/>
        <end position="21"/>
    </location>
</feature>
<feature type="compositionally biased region" description="Basic residues" evidence="2">
    <location>
        <begin position="7"/>
        <end position="20"/>
    </location>
</feature>
<evidence type="ECO:0000255" key="1">
    <source>
        <dbReference type="HAMAP-Rule" id="MF_00340"/>
    </source>
</evidence>
<evidence type="ECO:0000256" key="2">
    <source>
        <dbReference type="SAM" id="MobiDB-lite"/>
    </source>
</evidence>
<evidence type="ECO:0000305" key="3"/>